<organism>
    <name type="scientific">Staphylococcus haemolyticus (strain JCSC1435)</name>
    <dbReference type="NCBI Taxonomy" id="279808"/>
    <lineage>
        <taxon>Bacteria</taxon>
        <taxon>Bacillati</taxon>
        <taxon>Bacillota</taxon>
        <taxon>Bacilli</taxon>
        <taxon>Bacillales</taxon>
        <taxon>Staphylococcaceae</taxon>
        <taxon>Staphylococcus</taxon>
    </lineage>
</organism>
<reference key="1">
    <citation type="journal article" date="2005" name="J. Bacteriol.">
        <title>Whole-genome sequencing of Staphylococcus haemolyticus uncovers the extreme plasticity of its genome and the evolution of human-colonizing staphylococcal species.</title>
        <authorList>
            <person name="Takeuchi F."/>
            <person name="Watanabe S."/>
            <person name="Baba T."/>
            <person name="Yuzawa H."/>
            <person name="Ito T."/>
            <person name="Morimoto Y."/>
            <person name="Kuroda M."/>
            <person name="Cui L."/>
            <person name="Takahashi M."/>
            <person name="Ankai A."/>
            <person name="Baba S."/>
            <person name="Fukui S."/>
            <person name="Lee J.C."/>
            <person name="Hiramatsu K."/>
        </authorList>
    </citation>
    <scope>NUCLEOTIDE SEQUENCE [LARGE SCALE GENOMIC DNA]</scope>
    <source>
        <strain>JCSC1435</strain>
    </source>
</reference>
<dbReference type="EMBL" id="AP006716">
    <property type="protein sequence ID" value="BAE04984.1"/>
    <property type="molecule type" value="Genomic_DNA"/>
</dbReference>
<dbReference type="RefSeq" id="WP_011275961.1">
    <property type="nucleotide sequence ID" value="NC_007168.1"/>
</dbReference>
<dbReference type="SMR" id="Q4L5U1"/>
<dbReference type="KEGG" id="sha:SH1675"/>
<dbReference type="eggNOG" id="COG0806">
    <property type="taxonomic scope" value="Bacteria"/>
</dbReference>
<dbReference type="HOGENOM" id="CLU_077636_3_1_9"/>
<dbReference type="OrthoDB" id="9810331at2"/>
<dbReference type="Proteomes" id="UP000000543">
    <property type="component" value="Chromosome"/>
</dbReference>
<dbReference type="GO" id="GO:0005737">
    <property type="term" value="C:cytoplasm"/>
    <property type="evidence" value="ECO:0007669"/>
    <property type="project" value="UniProtKB-SubCell"/>
</dbReference>
<dbReference type="GO" id="GO:0005840">
    <property type="term" value="C:ribosome"/>
    <property type="evidence" value="ECO:0007669"/>
    <property type="project" value="InterPro"/>
</dbReference>
<dbReference type="GO" id="GO:0043022">
    <property type="term" value="F:ribosome binding"/>
    <property type="evidence" value="ECO:0007669"/>
    <property type="project" value="InterPro"/>
</dbReference>
<dbReference type="GO" id="GO:0042274">
    <property type="term" value="P:ribosomal small subunit biogenesis"/>
    <property type="evidence" value="ECO:0007669"/>
    <property type="project" value="UniProtKB-UniRule"/>
</dbReference>
<dbReference type="GO" id="GO:0006364">
    <property type="term" value="P:rRNA processing"/>
    <property type="evidence" value="ECO:0007669"/>
    <property type="project" value="UniProtKB-UniRule"/>
</dbReference>
<dbReference type="Gene3D" id="2.30.30.240">
    <property type="entry name" value="PRC-barrel domain"/>
    <property type="match status" value="1"/>
</dbReference>
<dbReference type="Gene3D" id="2.40.30.60">
    <property type="entry name" value="RimM"/>
    <property type="match status" value="1"/>
</dbReference>
<dbReference type="HAMAP" id="MF_00014">
    <property type="entry name" value="Ribosome_mat_RimM"/>
    <property type="match status" value="1"/>
</dbReference>
<dbReference type="InterPro" id="IPR011033">
    <property type="entry name" value="PRC_barrel-like_sf"/>
</dbReference>
<dbReference type="InterPro" id="IPR056792">
    <property type="entry name" value="PRC_RimM"/>
</dbReference>
<dbReference type="InterPro" id="IPR011961">
    <property type="entry name" value="RimM"/>
</dbReference>
<dbReference type="InterPro" id="IPR002676">
    <property type="entry name" value="RimM_N"/>
</dbReference>
<dbReference type="InterPro" id="IPR036976">
    <property type="entry name" value="RimM_N_sf"/>
</dbReference>
<dbReference type="InterPro" id="IPR009000">
    <property type="entry name" value="Transl_B-barrel_sf"/>
</dbReference>
<dbReference type="NCBIfam" id="TIGR02273">
    <property type="entry name" value="16S_RimM"/>
    <property type="match status" value="1"/>
</dbReference>
<dbReference type="PANTHER" id="PTHR33692">
    <property type="entry name" value="RIBOSOME MATURATION FACTOR RIMM"/>
    <property type="match status" value="1"/>
</dbReference>
<dbReference type="PANTHER" id="PTHR33692:SF1">
    <property type="entry name" value="RIBOSOME MATURATION FACTOR RIMM"/>
    <property type="match status" value="1"/>
</dbReference>
<dbReference type="Pfam" id="PF24986">
    <property type="entry name" value="PRC_RimM"/>
    <property type="match status" value="1"/>
</dbReference>
<dbReference type="Pfam" id="PF01782">
    <property type="entry name" value="RimM"/>
    <property type="match status" value="1"/>
</dbReference>
<dbReference type="SUPFAM" id="SSF50346">
    <property type="entry name" value="PRC-barrel domain"/>
    <property type="match status" value="1"/>
</dbReference>
<dbReference type="SUPFAM" id="SSF50447">
    <property type="entry name" value="Translation proteins"/>
    <property type="match status" value="1"/>
</dbReference>
<keyword id="KW-0143">Chaperone</keyword>
<keyword id="KW-0963">Cytoplasm</keyword>
<keyword id="KW-0690">Ribosome biogenesis</keyword>
<keyword id="KW-0698">rRNA processing</keyword>
<name>RIMM_STAHJ</name>
<feature type="chain" id="PRO_0000244172" description="Ribosome maturation factor RimM">
    <location>
        <begin position="1"/>
        <end position="167"/>
    </location>
</feature>
<feature type="domain" description="PRC barrel" evidence="1">
    <location>
        <begin position="94"/>
        <end position="165"/>
    </location>
</feature>
<gene>
    <name evidence="1" type="primary">rimM</name>
    <name type="ordered locus">SH1675</name>
</gene>
<sequence length="167" mass="19310">MQVEVGQIVNTHGIKGEVKVKSNSDFTDTRFQPGEVLTVNHQNHEEQLTVLSYRVHKGFHMLKFEGINNINDVEQYKGDYLYQERDHEDIELAENEYYYSDIIGSTVFDNDNQPIGRVINIFETGANDVWVVKGEKEYLIPYIADVVKEIDIENKTIRITPMEGLLD</sequence>
<proteinExistence type="inferred from homology"/>
<comment type="function">
    <text evidence="1">An accessory protein needed during the final step in the assembly of 30S ribosomal subunit, possibly for assembly of the head region. Essential for efficient processing of 16S rRNA. May be needed both before and after RbfA during the maturation of 16S rRNA. It has affinity for free ribosomal 30S subunits but not for 70S ribosomes.</text>
</comment>
<comment type="subunit">
    <text evidence="1">Binds ribosomal protein uS19.</text>
</comment>
<comment type="subcellular location">
    <subcellularLocation>
        <location evidence="1">Cytoplasm</location>
    </subcellularLocation>
</comment>
<comment type="domain">
    <text evidence="1">The PRC barrel domain binds ribosomal protein uS19.</text>
</comment>
<comment type="similarity">
    <text evidence="1">Belongs to the RimM family.</text>
</comment>
<protein>
    <recommendedName>
        <fullName evidence="1">Ribosome maturation factor RimM</fullName>
    </recommendedName>
</protein>
<accession>Q4L5U1</accession>
<evidence type="ECO:0000255" key="1">
    <source>
        <dbReference type="HAMAP-Rule" id="MF_00014"/>
    </source>
</evidence>